<sequence>MARIPRHRRLVLPLLCLLFQGATSLLFAIFVRYNHETDAALWHWGNHSNVDNEFYFRYPSFQDVHVMVFVGFGFLMVFLQRYGFSSVGFTFLVATFTLQWATLLQGFLHSFHGGHIHIGVESLINADFCAGAVLISFGAVLGKTGPAQLLLMALLEAVLFSVNEFILLSLLGVRDAGGSMTIHTFGAYFGLFLSRVLYRSQLEKSRHRQTSVYNSDLFAMIGTIFLWVFWPSFNSAPTALGDGQHRTVVNTYYSLTASTLSTFALSALVSGDGRLDMVHIQNAALAGGVVVGTASEMMLTPFGALAAGFLAGTVSTLGYKFFTPILESRFKLQDTCGVHNLHGMPGLLGAILGVLVAALATHEAYGDGLQTVFPLIAKGQRSATSQAMYQLFGMFVTLVFASVGGSLGGLLLKLPFLDSPPDSQCFEDQVYWEVPGEQEAETQRPLRTEEPDTQA</sequence>
<comment type="function">
    <text evidence="2">Ammonium transporter involved in the maintenance of acid-base homeostasis. Transports ammonium and its related derivative methylammonium across the basolateral plasma membrane of epithelial cells likely contributing to renal transepithelial ammonia transport and ammonia metabolism. May transport either NH4(+) or NH3 ammonia species predominantly mediating an electrogenic NH4(+) transport (By similarity). May act as a CO2 channel providing for renal acid secretion (By similarity).</text>
</comment>
<comment type="catalytic activity">
    <reaction evidence="2">
        <text>NH4(+)(in) = NH4(+)(out)</text>
        <dbReference type="Rhea" id="RHEA:28747"/>
        <dbReference type="ChEBI" id="CHEBI:28938"/>
    </reaction>
    <physiologicalReaction direction="left-to-right" evidence="2">
        <dbReference type="Rhea" id="RHEA:28748"/>
    </physiologicalReaction>
    <physiologicalReaction direction="right-to-left" evidence="2">
        <dbReference type="Rhea" id="RHEA:28749"/>
    </physiologicalReaction>
</comment>
<comment type="catalytic activity">
    <reaction evidence="2">
        <text>methylamine(out) = methylamine(in)</text>
        <dbReference type="Rhea" id="RHEA:74391"/>
        <dbReference type="ChEBI" id="CHEBI:59338"/>
    </reaction>
    <physiologicalReaction direction="left-to-right" evidence="2">
        <dbReference type="Rhea" id="RHEA:74392"/>
    </physiologicalReaction>
</comment>
<comment type="catalytic activity">
    <reaction evidence="2">
        <text>CO2(out) = CO2(in)</text>
        <dbReference type="Rhea" id="RHEA:74891"/>
        <dbReference type="ChEBI" id="CHEBI:16526"/>
    </reaction>
    <physiologicalReaction direction="left-to-right" evidence="2">
        <dbReference type="Rhea" id="RHEA:74892"/>
    </physiologicalReaction>
</comment>
<comment type="subunit">
    <text evidence="1">Interacts (via C-terminus) with ANK2 and ANK3; required for targeting to the basolateral membrane.</text>
</comment>
<comment type="subcellular location">
    <subcellularLocation>
        <location>Basolateral cell membrane</location>
        <topology>Multi-pass membrane protein</topology>
    </subcellularLocation>
    <subcellularLocation>
        <location evidence="1">Cytoplasmic vesicle membrane</location>
        <topology evidence="1">Multi-pass membrane protein</topology>
    </subcellularLocation>
</comment>
<comment type="tissue specificity">
    <text evidence="4">Expressed in kidney by connecting segments and collecting tubules (at protein level).</text>
</comment>
<comment type="PTM">
    <text evidence="4">N-glycosylated.</text>
</comment>
<comment type="similarity">
    <text evidence="5">Belongs to the ammonium transporter (TC 2.A.49) family. Rh subfamily.</text>
</comment>
<organism>
    <name type="scientific">Rattus norvegicus</name>
    <name type="common">Rat</name>
    <dbReference type="NCBI Taxonomy" id="10116"/>
    <lineage>
        <taxon>Eukaryota</taxon>
        <taxon>Metazoa</taxon>
        <taxon>Chordata</taxon>
        <taxon>Craniata</taxon>
        <taxon>Vertebrata</taxon>
        <taxon>Euteleostomi</taxon>
        <taxon>Mammalia</taxon>
        <taxon>Eutheria</taxon>
        <taxon>Euarchontoglires</taxon>
        <taxon>Glires</taxon>
        <taxon>Rodentia</taxon>
        <taxon>Myomorpha</taxon>
        <taxon>Muroidea</taxon>
        <taxon>Muridae</taxon>
        <taxon>Murinae</taxon>
        <taxon>Rattus</taxon>
    </lineage>
</organism>
<evidence type="ECO:0000250" key="1"/>
<evidence type="ECO:0000250" key="2">
    <source>
        <dbReference type="UniProtKB" id="Q9H310"/>
    </source>
</evidence>
<evidence type="ECO:0000255" key="3"/>
<evidence type="ECO:0000269" key="4">
    <source>
    </source>
</evidence>
<evidence type="ECO:0000305" key="5"/>
<proteinExistence type="evidence at protein level"/>
<reference key="1">
    <citation type="journal article" date="2005" name="Proc. Natl. Acad. Sci. U.S.A.">
        <title>Evolutionary conservation and diversification of Rh family genes and proteins.</title>
        <authorList>
            <person name="Huang C.-H."/>
            <person name="Peng J."/>
        </authorList>
    </citation>
    <scope>NUCLEOTIDE SEQUENCE [MRNA]</scope>
</reference>
<reference key="2">
    <citation type="journal article" date="2004" name="Genome Res.">
        <title>The status, quality, and expansion of the NIH full-length cDNA project: the Mammalian Gene Collection (MGC).</title>
        <authorList>
            <consortium name="The MGC Project Team"/>
        </authorList>
    </citation>
    <scope>NUCLEOTIDE SEQUENCE [LARGE SCALE MRNA]</scope>
    <source>
        <tissue>Kidney</tissue>
    </source>
</reference>
<reference key="3">
    <citation type="journal article" date="2003" name="J. Am. Soc. Nephrol.">
        <title>RhBG and RhCG, the putative ammonia transporters, are expressed in the same cells in the distal nephron.</title>
        <authorList>
            <person name="Quentin F."/>
            <person name="Eladari D."/>
            <person name="Cheval L."/>
            <person name="Lopez C."/>
            <person name="Goossens D."/>
            <person name="Colin Y."/>
            <person name="Cartron J.-P."/>
            <person name="Paillard M."/>
            <person name="Chambrey R."/>
        </authorList>
    </citation>
    <scope>SUBCELLULAR LOCATION</scope>
    <scope>GLYCOSYLATION</scope>
    <scope>TISSUE SPECIFICITY</scope>
</reference>
<reference key="4">
    <citation type="journal article" date="2005" name="J. Biol. Chem.">
        <title>The ammonium transporter RhBG: requirement of a tyrosine-based signal and ankyrin-G for basolateral targeting and membrane anchorage in polarized kidney epithelial cells.</title>
        <authorList>
            <person name="Lopez C."/>
            <person name="Metral S."/>
            <person name="Eladari D."/>
            <person name="Drevensek S."/>
            <person name="Gane P."/>
            <person name="Chambrey R."/>
            <person name="Bennett V."/>
            <person name="Cartron J.-P."/>
            <person name="Le Van Kim C."/>
            <person name="Colin Y."/>
        </authorList>
    </citation>
    <scope>SUBCELLULAR LOCATION</scope>
</reference>
<accession>Q68FT6</accession>
<accession>Q7TNP0</accession>
<gene>
    <name type="primary">Rhbg</name>
</gene>
<dbReference type="EMBL" id="AY129072">
    <property type="protein sequence ID" value="AAN07790.1"/>
    <property type="molecule type" value="mRNA"/>
</dbReference>
<dbReference type="EMBL" id="BC079365">
    <property type="protein sequence ID" value="AAH79365.1"/>
    <property type="molecule type" value="mRNA"/>
</dbReference>
<dbReference type="RefSeq" id="NP_898877.1">
    <property type="nucleotide sequence ID" value="NM_183054.1"/>
</dbReference>
<dbReference type="SMR" id="Q68FT6"/>
<dbReference type="FunCoup" id="Q68FT6">
    <property type="interactions" value="33"/>
</dbReference>
<dbReference type="STRING" id="10116.ENSRNOP00000026396"/>
<dbReference type="GlyCosmos" id="Q68FT6">
    <property type="glycosylation" value="1 site, No reported glycans"/>
</dbReference>
<dbReference type="GlyGen" id="Q68FT6">
    <property type="glycosylation" value="1 site"/>
</dbReference>
<dbReference type="PhosphoSitePlus" id="Q68FT6"/>
<dbReference type="PaxDb" id="10116-ENSRNOP00000026396"/>
<dbReference type="Ensembl" id="ENSRNOT00000026396.6">
    <property type="protein sequence ID" value="ENSRNOP00000026396.4"/>
    <property type="gene ID" value="ENSRNOG00000019412.6"/>
</dbReference>
<dbReference type="GeneID" id="310625"/>
<dbReference type="KEGG" id="rno:310625"/>
<dbReference type="UCSC" id="RGD:727813">
    <property type="organism name" value="rat"/>
</dbReference>
<dbReference type="AGR" id="RGD:727813"/>
<dbReference type="CTD" id="57127"/>
<dbReference type="RGD" id="727813">
    <property type="gene designation" value="Rhbg"/>
</dbReference>
<dbReference type="eggNOG" id="KOG3796">
    <property type="taxonomic scope" value="Eukaryota"/>
</dbReference>
<dbReference type="GeneTree" id="ENSGT00950000182844"/>
<dbReference type="HOGENOM" id="CLU_021386_0_0_1"/>
<dbReference type="InParanoid" id="Q68FT6"/>
<dbReference type="OMA" id="DNIYWEV"/>
<dbReference type="OrthoDB" id="80910at9989"/>
<dbReference type="PhylomeDB" id="Q68FT6"/>
<dbReference type="TreeFam" id="TF314450"/>
<dbReference type="Reactome" id="R-RNO-444411">
    <property type="pathway name" value="Rhesus glycoproteins mediate ammonium transport"/>
</dbReference>
<dbReference type="PRO" id="PR:Q68FT6"/>
<dbReference type="Proteomes" id="UP000002494">
    <property type="component" value="Chromosome 2"/>
</dbReference>
<dbReference type="Bgee" id="ENSRNOG00000019412">
    <property type="expression patterns" value="Expressed in ovary and 16 other cell types or tissues"/>
</dbReference>
<dbReference type="ExpressionAtlas" id="Q68FT6">
    <property type="expression patterns" value="baseline and differential"/>
</dbReference>
<dbReference type="GO" id="GO:0016323">
    <property type="term" value="C:basolateral plasma membrane"/>
    <property type="evidence" value="ECO:0000314"/>
    <property type="project" value="UniProtKB"/>
</dbReference>
<dbReference type="GO" id="GO:0030659">
    <property type="term" value="C:cytoplasmic vesicle membrane"/>
    <property type="evidence" value="ECO:0007669"/>
    <property type="project" value="UniProtKB-SubCell"/>
</dbReference>
<dbReference type="GO" id="GO:0016020">
    <property type="term" value="C:membrane"/>
    <property type="evidence" value="ECO:0000266"/>
    <property type="project" value="RGD"/>
</dbReference>
<dbReference type="GO" id="GO:0005886">
    <property type="term" value="C:plasma membrane"/>
    <property type="evidence" value="ECO:0000266"/>
    <property type="project" value="RGD"/>
</dbReference>
<dbReference type="GO" id="GO:0014731">
    <property type="term" value="C:spectrin-associated cytoskeleton"/>
    <property type="evidence" value="ECO:0000250"/>
    <property type="project" value="UniProtKB"/>
</dbReference>
<dbReference type="GO" id="GO:0008519">
    <property type="term" value="F:ammonium channel activity"/>
    <property type="evidence" value="ECO:0000250"/>
    <property type="project" value="UniProtKB"/>
</dbReference>
<dbReference type="GO" id="GO:0030506">
    <property type="term" value="F:ankyrin binding"/>
    <property type="evidence" value="ECO:0000266"/>
    <property type="project" value="RGD"/>
</dbReference>
<dbReference type="GO" id="GO:0035379">
    <property type="term" value="F:carbon dioxide transmembrane transporter activity"/>
    <property type="evidence" value="ECO:0000250"/>
    <property type="project" value="UniProtKB"/>
</dbReference>
<dbReference type="GO" id="GO:0097272">
    <property type="term" value="P:ammonium homeostasis"/>
    <property type="evidence" value="ECO:0000318"/>
    <property type="project" value="GO_Central"/>
</dbReference>
<dbReference type="GO" id="GO:0072488">
    <property type="term" value="P:ammonium transmembrane transport"/>
    <property type="evidence" value="ECO:0000250"/>
    <property type="project" value="UniProtKB"/>
</dbReference>
<dbReference type="GO" id="GO:0070634">
    <property type="term" value="P:transepithelial ammonium transport"/>
    <property type="evidence" value="ECO:0000266"/>
    <property type="project" value="RGD"/>
</dbReference>
<dbReference type="FunFam" id="1.10.3430.10:FF:000001">
    <property type="entry name" value="Ammonium transporter Rh type C"/>
    <property type="match status" value="1"/>
</dbReference>
<dbReference type="Gene3D" id="1.10.3430.10">
    <property type="entry name" value="Ammonium transporter AmtB like domains"/>
    <property type="match status" value="1"/>
</dbReference>
<dbReference type="InterPro" id="IPR029020">
    <property type="entry name" value="Ammonium/urea_transptr"/>
</dbReference>
<dbReference type="InterPro" id="IPR024041">
    <property type="entry name" value="NH4_transpt_AmtB-like_dom"/>
</dbReference>
<dbReference type="InterPro" id="IPR002229">
    <property type="entry name" value="RhesusRHD"/>
</dbReference>
<dbReference type="PANTHER" id="PTHR11730">
    <property type="entry name" value="AMMONIUM TRANSPORTER"/>
    <property type="match status" value="1"/>
</dbReference>
<dbReference type="PANTHER" id="PTHR11730:SF42">
    <property type="entry name" value="AMMONIUM TRANSPORTER RH TYPE B"/>
    <property type="match status" value="1"/>
</dbReference>
<dbReference type="Pfam" id="PF00909">
    <property type="entry name" value="Ammonium_transp"/>
    <property type="match status" value="1"/>
</dbReference>
<dbReference type="PRINTS" id="PR00342">
    <property type="entry name" value="RHESUSRHD"/>
</dbReference>
<dbReference type="SUPFAM" id="SSF111352">
    <property type="entry name" value="Ammonium transporter"/>
    <property type="match status" value="1"/>
</dbReference>
<keyword id="KW-0924">Ammonia transport</keyword>
<keyword id="KW-1003">Cell membrane</keyword>
<keyword id="KW-0968">Cytoplasmic vesicle</keyword>
<keyword id="KW-0325">Glycoprotein</keyword>
<keyword id="KW-0472">Membrane</keyword>
<keyword id="KW-1185">Reference proteome</keyword>
<keyword id="KW-0812">Transmembrane</keyword>
<keyword id="KW-1133">Transmembrane helix</keyword>
<keyword id="KW-0813">Transport</keyword>
<name>RHBG_RAT</name>
<protein>
    <recommendedName>
        <fullName>Ammonium transporter Rh type B</fullName>
    </recommendedName>
    <alternativeName>
        <fullName>Rhesus blood group family type B glycoprotein</fullName>
        <shortName>Rh family type B glycoprotein</shortName>
        <shortName>Rh type B glycoprotein</shortName>
    </alternativeName>
</protein>
<feature type="chain" id="PRO_0000283605" description="Ammonium transporter Rh type B">
    <location>
        <begin position="1"/>
        <end position="455"/>
    </location>
</feature>
<feature type="topological domain" description="Cytoplasmic" evidence="3">
    <location>
        <begin position="1"/>
        <end position="10"/>
    </location>
</feature>
<feature type="transmembrane region" description="Helical" evidence="3">
    <location>
        <begin position="11"/>
        <end position="31"/>
    </location>
</feature>
<feature type="topological domain" description="Extracellular" evidence="3">
    <location>
        <begin position="32"/>
        <end position="58"/>
    </location>
</feature>
<feature type="transmembrane region" description="Helical" evidence="3">
    <location>
        <begin position="59"/>
        <end position="79"/>
    </location>
</feature>
<feature type="topological domain" description="Cytoplasmic" evidence="3">
    <location>
        <begin position="80"/>
        <end position="83"/>
    </location>
</feature>
<feature type="transmembrane region" description="Helical" evidence="3">
    <location>
        <begin position="84"/>
        <end position="104"/>
    </location>
</feature>
<feature type="topological domain" description="Extracellular" evidence="3">
    <location>
        <begin position="105"/>
        <end position="121"/>
    </location>
</feature>
<feature type="transmembrane region" description="Helical" evidence="3">
    <location>
        <begin position="122"/>
        <end position="142"/>
    </location>
</feature>
<feature type="topological domain" description="Cytoplasmic" evidence="3">
    <location>
        <begin position="143"/>
        <end position="148"/>
    </location>
</feature>
<feature type="transmembrane region" description="Helical" evidence="3">
    <location>
        <begin position="149"/>
        <end position="169"/>
    </location>
</feature>
<feature type="topological domain" description="Extracellular" evidence="3">
    <location>
        <begin position="170"/>
        <end position="176"/>
    </location>
</feature>
<feature type="transmembrane region" description="Helical" evidence="3">
    <location>
        <begin position="177"/>
        <end position="197"/>
    </location>
</feature>
<feature type="topological domain" description="Cytoplasmic" evidence="3">
    <location>
        <begin position="198"/>
        <end position="216"/>
    </location>
</feature>
<feature type="transmembrane region" description="Helical" evidence="3">
    <location>
        <begin position="217"/>
        <end position="237"/>
    </location>
</feature>
<feature type="topological domain" description="Extracellular" evidence="3">
    <location>
        <begin position="238"/>
        <end position="247"/>
    </location>
</feature>
<feature type="transmembrane region" description="Helical" evidence="3">
    <location>
        <begin position="248"/>
        <end position="270"/>
    </location>
</feature>
<feature type="topological domain" description="Cytoplasmic" evidence="3">
    <location>
        <begin position="271"/>
        <end position="274"/>
    </location>
</feature>
<feature type="transmembrane region" description="Helical" evidence="3">
    <location>
        <begin position="275"/>
        <end position="295"/>
    </location>
</feature>
<feature type="topological domain" description="Extracellular" evidence="3">
    <location>
        <position position="296"/>
    </location>
</feature>
<feature type="transmembrane region" description="Helical" evidence="3">
    <location>
        <begin position="297"/>
        <end position="317"/>
    </location>
</feature>
<feature type="topological domain" description="Cytoplasmic" evidence="3">
    <location>
        <begin position="318"/>
        <end position="340"/>
    </location>
</feature>
<feature type="transmembrane region" description="Helical" evidence="3">
    <location>
        <begin position="341"/>
        <end position="361"/>
    </location>
</feature>
<feature type="topological domain" description="Extracellular" evidence="3">
    <location>
        <begin position="362"/>
        <end position="390"/>
    </location>
</feature>
<feature type="transmembrane region" description="Helical" evidence="3">
    <location>
        <begin position="391"/>
        <end position="411"/>
    </location>
</feature>
<feature type="topological domain" description="Cytoplasmic" evidence="3">
    <location>
        <begin position="412"/>
        <end position="455"/>
    </location>
</feature>
<feature type="region of interest" description="Interaction with ANK3" evidence="1">
    <location>
        <begin position="413"/>
        <end position="421"/>
    </location>
</feature>
<feature type="glycosylation site" description="N-linked (GlcNAc...) asparagine" evidence="3">
    <location>
        <position position="46"/>
    </location>
</feature>
<feature type="sequence conflict" description="In Ref. 1; AAN07790." evidence="5" ref="1">
    <original>L</original>
    <variation>V</variation>
    <location>
        <position position="347"/>
    </location>
</feature>
<feature type="sequence conflict" description="In Ref. 1; AAN07790." evidence="5" ref="1">
    <original>L</original>
    <variation>V</variation>
    <location>
        <position position="355"/>
    </location>
</feature>
<feature type="sequence conflict" description="In Ref. 1; AAN07790." evidence="5" ref="1">
    <original>K</original>
    <variation>R</variation>
    <location>
        <position position="413"/>
    </location>
</feature>